<organism>
    <name type="scientific">Influenza A virus (strain A/Duck/Ukraine/1/1963 H3N8)</name>
    <dbReference type="NCBI Taxonomy" id="385580"/>
    <lineage>
        <taxon>Viruses</taxon>
        <taxon>Riboviria</taxon>
        <taxon>Orthornavirae</taxon>
        <taxon>Negarnaviricota</taxon>
        <taxon>Polyploviricotina</taxon>
        <taxon>Insthoviricetes</taxon>
        <taxon>Articulavirales</taxon>
        <taxon>Orthomyxoviridae</taxon>
        <taxon>Alphainfluenzavirus</taxon>
        <taxon>Alphainfluenzavirus influenzae</taxon>
        <taxon>Influenza A virus</taxon>
    </lineage>
</organism>
<name>NRAM_I63A3</name>
<feature type="chain" id="PRO_0000078688" description="Neuraminidase">
    <location>
        <begin position="1"/>
        <end position="470"/>
    </location>
</feature>
<feature type="topological domain" description="Intravirion" evidence="1">
    <location>
        <begin position="1"/>
        <end position="14"/>
    </location>
</feature>
<feature type="transmembrane region" description="Helical" evidence="1">
    <location>
        <begin position="15"/>
        <end position="35"/>
    </location>
</feature>
<feature type="topological domain" description="Virion surface" evidence="1">
    <location>
        <begin position="36"/>
        <end position="470"/>
    </location>
</feature>
<feature type="region of interest" description="Involved in apical transport and lipid raft association" evidence="1">
    <location>
        <begin position="11"/>
        <end position="32"/>
    </location>
</feature>
<feature type="region of interest" description="Hypervariable stalk region" evidence="1">
    <location>
        <begin position="32"/>
        <end position="86"/>
    </location>
</feature>
<feature type="region of interest" description="Head of neuraminidase" evidence="1">
    <location>
        <begin position="89"/>
        <end position="470"/>
    </location>
</feature>
<feature type="active site" description="Proton donor/acceptor" evidence="1">
    <location>
        <position position="149"/>
    </location>
</feature>
<feature type="active site" description="Nucleophile" evidence="1">
    <location>
        <position position="402"/>
    </location>
</feature>
<feature type="binding site" evidence="1">
    <location>
        <position position="116"/>
    </location>
    <ligand>
        <name>substrate</name>
    </ligand>
</feature>
<feature type="binding site" evidence="1">
    <location>
        <position position="150"/>
    </location>
    <ligand>
        <name>substrate</name>
    </ligand>
</feature>
<feature type="binding site" evidence="1">
    <location>
        <begin position="275"/>
        <end position="276"/>
    </location>
    <ligand>
        <name>substrate</name>
    </ligand>
</feature>
<feature type="binding site" evidence="1">
    <location>
        <position position="291"/>
    </location>
    <ligand>
        <name>substrate</name>
    </ligand>
</feature>
<feature type="binding site" evidence="1">
    <location>
        <position position="292"/>
    </location>
    <ligand>
        <name>Ca(2+)</name>
        <dbReference type="ChEBI" id="CHEBI:29108"/>
    </ligand>
</feature>
<feature type="binding site" evidence="1">
    <location>
        <position position="296"/>
    </location>
    <ligand>
        <name>Ca(2+)</name>
        <dbReference type="ChEBI" id="CHEBI:29108"/>
    </ligand>
</feature>
<feature type="binding site" evidence="1">
    <location>
        <position position="322"/>
    </location>
    <ligand>
        <name>Ca(2+)</name>
        <dbReference type="ChEBI" id="CHEBI:29108"/>
    </ligand>
</feature>
<feature type="binding site" evidence="1">
    <location>
        <position position="368"/>
    </location>
    <ligand>
        <name>substrate</name>
    </ligand>
</feature>
<feature type="glycosylation site" description="N-linked (GlcNAc...) asparagine; by host" evidence="1">
    <location>
        <position position="46"/>
    </location>
</feature>
<feature type="glycosylation site" description="N-linked (GlcNAc...) asparagine; by host" evidence="1">
    <location>
        <position position="54"/>
    </location>
</feature>
<feature type="glycosylation site" description="N-linked (GlcNAc...) asparagine; by host" evidence="1">
    <location>
        <position position="84"/>
    </location>
</feature>
<feature type="glycosylation site" description="N-linked (GlcNAc...) asparagine; by host" evidence="1">
    <location>
        <position position="144"/>
    </location>
</feature>
<feature type="glycosylation site" description="N-linked (GlcNAc...) asparagine; by host" evidence="1">
    <location>
        <position position="398"/>
    </location>
</feature>
<feature type="disulfide bond" evidence="1">
    <location>
        <begin position="90"/>
        <end position="417"/>
    </location>
</feature>
<feature type="disulfide bond" evidence="1">
    <location>
        <begin position="122"/>
        <end position="127"/>
    </location>
</feature>
<feature type="disulfide bond" evidence="1">
    <location>
        <begin position="182"/>
        <end position="229"/>
    </location>
</feature>
<feature type="disulfide bond" evidence="1">
    <location>
        <begin position="231"/>
        <end position="236"/>
    </location>
</feature>
<feature type="disulfide bond" evidence="1">
    <location>
        <begin position="277"/>
        <end position="290"/>
    </location>
</feature>
<feature type="disulfide bond" evidence="1">
    <location>
        <begin position="279"/>
        <end position="288"/>
    </location>
</feature>
<feature type="disulfide bond" evidence="1">
    <location>
        <begin position="316"/>
        <end position="335"/>
    </location>
</feature>
<feature type="disulfide bond" evidence="1">
    <location>
        <begin position="421"/>
        <end position="446"/>
    </location>
</feature>
<feature type="strand" evidence="3">
    <location>
        <begin position="96"/>
        <end position="100"/>
    </location>
</feature>
<feature type="helix" evidence="3">
    <location>
        <begin position="103"/>
        <end position="106"/>
    </location>
</feature>
<feature type="turn" evidence="3">
    <location>
        <begin position="107"/>
        <end position="109"/>
    </location>
</feature>
<feature type="strand" evidence="3">
    <location>
        <begin position="112"/>
        <end position="122"/>
    </location>
</feature>
<feature type="strand" evidence="3">
    <location>
        <begin position="127"/>
        <end position="137"/>
    </location>
</feature>
<feature type="helix" evidence="3">
    <location>
        <begin position="141"/>
        <end position="144"/>
    </location>
</feature>
<feature type="strand" evidence="3">
    <location>
        <begin position="155"/>
        <end position="160"/>
    </location>
</feature>
<feature type="helix" evidence="3">
    <location>
        <begin position="167"/>
        <end position="169"/>
    </location>
</feature>
<feature type="strand" evidence="3">
    <location>
        <begin position="171"/>
        <end position="175"/>
    </location>
</feature>
<feature type="strand" evidence="3">
    <location>
        <begin position="177"/>
        <end position="183"/>
    </location>
</feature>
<feature type="strand" evidence="3">
    <location>
        <begin position="185"/>
        <end position="195"/>
    </location>
</feature>
<feature type="helix" evidence="3">
    <location>
        <begin position="197"/>
        <end position="199"/>
    </location>
</feature>
<feature type="strand" evidence="3">
    <location>
        <begin position="201"/>
        <end position="215"/>
    </location>
</feature>
<feature type="strand" evidence="3">
    <location>
        <begin position="217"/>
        <end position="220"/>
    </location>
</feature>
<feature type="strand" evidence="2">
    <location>
        <begin position="222"/>
        <end position="224"/>
    </location>
</feature>
<feature type="strand" evidence="3">
    <location>
        <begin position="226"/>
        <end position="228"/>
    </location>
</feature>
<feature type="strand" evidence="3">
    <location>
        <begin position="230"/>
        <end position="232"/>
    </location>
</feature>
<feature type="strand" evidence="3">
    <location>
        <begin position="235"/>
        <end position="243"/>
    </location>
</feature>
<feature type="strand" evidence="3">
    <location>
        <begin position="245"/>
        <end position="247"/>
    </location>
</feature>
<feature type="strand" evidence="3">
    <location>
        <begin position="250"/>
        <end position="257"/>
    </location>
</feature>
<feature type="strand" evidence="3">
    <location>
        <begin position="260"/>
        <end position="266"/>
    </location>
</feature>
<feature type="strand" evidence="3">
    <location>
        <begin position="275"/>
        <end position="282"/>
    </location>
</feature>
<feature type="strand" evidence="3">
    <location>
        <begin position="285"/>
        <end position="291"/>
    </location>
</feature>
<feature type="strand" evidence="4">
    <location>
        <begin position="294"/>
        <end position="298"/>
    </location>
</feature>
<feature type="strand" evidence="3">
    <location>
        <begin position="300"/>
        <end position="304"/>
    </location>
</feature>
<feature type="strand" evidence="3">
    <location>
        <begin position="310"/>
        <end position="314"/>
    </location>
</feature>
<feature type="strand" evidence="4">
    <location>
        <begin position="317"/>
        <end position="319"/>
    </location>
</feature>
<feature type="strand" evidence="3">
    <location>
        <begin position="322"/>
        <end position="324"/>
    </location>
</feature>
<feature type="helix" evidence="4">
    <location>
        <begin position="328"/>
        <end position="330"/>
    </location>
</feature>
<feature type="strand" evidence="3">
    <location>
        <begin position="335"/>
        <end position="337"/>
    </location>
</feature>
<feature type="strand" evidence="3">
    <location>
        <begin position="350"/>
        <end position="353"/>
    </location>
</feature>
<feature type="strand" evidence="3">
    <location>
        <begin position="356"/>
        <end position="361"/>
    </location>
</feature>
<feature type="strand" evidence="3">
    <location>
        <begin position="363"/>
        <end position="376"/>
    </location>
</feature>
<feature type="turn" evidence="3">
    <location>
        <begin position="377"/>
        <end position="381"/>
    </location>
</feature>
<feature type="strand" evidence="3">
    <location>
        <begin position="387"/>
        <end position="399"/>
    </location>
</feature>
<feature type="strand" evidence="3">
    <location>
        <begin position="403"/>
        <end position="408"/>
    </location>
</feature>
<feature type="helix" evidence="3">
    <location>
        <begin position="410"/>
        <end position="413"/>
    </location>
</feature>
<feature type="strand" evidence="3">
    <location>
        <begin position="415"/>
        <end position="429"/>
    </location>
</feature>
<feature type="turn" evidence="3">
    <location>
        <begin position="430"/>
        <end position="432"/>
    </location>
</feature>
<feature type="strand" evidence="2">
    <location>
        <begin position="433"/>
        <end position="436"/>
    </location>
</feature>
<feature type="strand" evidence="3">
    <location>
        <begin position="438"/>
        <end position="446"/>
    </location>
</feature>
<feature type="helix" evidence="4">
    <location>
        <begin position="466"/>
        <end position="468"/>
    </location>
</feature>
<comment type="function">
    <text evidence="1">Catalyzes the removal of terminal sialic acid residues from viral and cellular glycoconjugates. Cleaves off the terminal sialic acids on the glycosylated HA during virus budding to facilitate virus release. Additionally helps virus spread through the circulation by further removing sialic acids from the cell surface. These cleavages prevent self-aggregation and ensure the efficient spread of the progeny virus from cell to cell. Otherwise, infection would be limited to one round of replication. Described as a receptor-destroying enzyme because it cleaves a terminal sialic acid from the cellular receptors. May facilitate viral invasion of the upper airways by cleaving the sialic acid moieties on the mucin of the airway epithelial cells. Likely to plays a role in the budding process through its association with lipid rafts during intracellular transport. May additionally display a raft-association independent effect on budding. Plays a role in the determination of host range restriction on replication and virulence. Sialidase activity in late endosome/lysosome traffic seems to enhance virus replication.</text>
</comment>
<comment type="catalytic activity">
    <reaction evidence="1">
        <text>Hydrolysis of alpha-(2-&gt;3)-, alpha-(2-&gt;6)-, alpha-(2-&gt;8)- glycosidic linkages of terminal sialic acid residues in oligosaccharides, glycoproteins, glycolipids, colominic acid and synthetic substrates.</text>
        <dbReference type="EC" id="3.2.1.18"/>
    </reaction>
</comment>
<comment type="cofactor">
    <cofactor evidence="1">
        <name>Ca(2+)</name>
        <dbReference type="ChEBI" id="CHEBI:29108"/>
    </cofactor>
</comment>
<comment type="activity regulation">
    <text evidence="1">Inhibited by the neuraminidase inhibitors zanamivir (Relenza) and oseltamivir (Tamiflu). These drugs interfere with the release of progeny virus from infected cells and are effective against all influenza strains. Resistance to neuraminidase inhibitors is quite rare.</text>
</comment>
<comment type="subunit">
    <text evidence="1">Homotetramer.</text>
</comment>
<comment type="subcellular location">
    <subcellularLocation>
        <location evidence="1">Virion membrane</location>
    </subcellularLocation>
    <subcellularLocation>
        <location evidence="1">Host apical cell membrane</location>
        <topology evidence="1">Single-pass type II membrane protein</topology>
    </subcellularLocation>
    <text evidence="1">Preferentially accumulates at the apical plasma membrane in infected polarized epithelial cells, which is the virus assembly site. Uses lipid rafts for cell surface transport and apical sorting. In the virion, forms a mushroom-shaped spike on the surface of the membrane.</text>
</comment>
<comment type="domain">
    <text evidence="1">Intact N-terminus is essential for virion morphogenesis. Possesses two apical sorting signals, one in the ectodomain, which is likely to be a glycan, and the other in the transmembrane domain. The transmembrane domain also plays a role in lipid raft association.</text>
</comment>
<comment type="PTM">
    <text evidence="1">N-glycosylated.</text>
</comment>
<comment type="miscellaneous">
    <text>The influenza A genome consist of 8 RNA segments. Genetic variation of hemagglutinin and/or neuraminidase genes results in the emergence of new influenza strains. The mechanism of variation can be the result of point mutations or the result of genetic reassortment between segments of two different strains.</text>
</comment>
<comment type="similarity">
    <text evidence="1">Belongs to the glycosyl hydrolase 34 family.</text>
</comment>
<keyword id="KW-0002">3D-structure</keyword>
<keyword id="KW-0106">Calcium</keyword>
<keyword id="KW-1015">Disulfide bond</keyword>
<keyword id="KW-0325">Glycoprotein</keyword>
<keyword id="KW-0326">Glycosidase</keyword>
<keyword id="KW-1032">Host cell membrane</keyword>
<keyword id="KW-1043">Host membrane</keyword>
<keyword id="KW-0378">Hydrolase</keyword>
<keyword id="KW-0472">Membrane</keyword>
<keyword id="KW-0479">Metal-binding</keyword>
<keyword id="KW-0735">Signal-anchor</keyword>
<keyword id="KW-0812">Transmembrane</keyword>
<keyword id="KW-1133">Transmembrane helix</keyword>
<keyword id="KW-0946">Virion</keyword>
<organismHost>
    <name type="scientific">Aves</name>
    <dbReference type="NCBI Taxonomy" id="8782"/>
</organismHost>
<organismHost>
    <name type="scientific">Equus caballus</name>
    <name type="common">Horse</name>
    <dbReference type="NCBI Taxonomy" id="9796"/>
</organismHost>
<gene>
    <name evidence="1" type="primary">NA</name>
</gene>
<dbReference type="EC" id="3.2.1.18" evidence="1"/>
<dbReference type="EMBL" id="L06576">
    <property type="protein sequence ID" value="AAA16234.1"/>
    <property type="molecule type" value="Unassigned_RNA"/>
</dbReference>
<dbReference type="PDB" id="2HT5">
    <property type="method" value="X-ray"/>
    <property type="resolution" value="2.40 A"/>
    <property type="chains" value="A=81-470"/>
</dbReference>
<dbReference type="PDB" id="2HT7">
    <property type="method" value="X-ray"/>
    <property type="resolution" value="2.60 A"/>
    <property type="chains" value="A=81-470"/>
</dbReference>
<dbReference type="PDB" id="2HT8">
    <property type="method" value="X-ray"/>
    <property type="resolution" value="2.40 A"/>
    <property type="chains" value="A=81-470"/>
</dbReference>
<dbReference type="PDB" id="2HTQ">
    <property type="method" value="X-ray"/>
    <property type="resolution" value="2.20 A"/>
    <property type="chains" value="A=81-470"/>
</dbReference>
<dbReference type="PDB" id="2HTR">
    <property type="method" value="X-ray"/>
    <property type="resolution" value="2.50 A"/>
    <property type="chains" value="A=81-470"/>
</dbReference>
<dbReference type="PDB" id="2HTU">
    <property type="method" value="X-ray"/>
    <property type="resolution" value="2.20 A"/>
    <property type="chains" value="A=81-470"/>
</dbReference>
<dbReference type="PDB" id="3O9J">
    <property type="method" value="X-ray"/>
    <property type="resolution" value="2.00 A"/>
    <property type="chains" value="A=81-467"/>
</dbReference>
<dbReference type="PDB" id="3O9K">
    <property type="method" value="X-ray"/>
    <property type="resolution" value="2.49 A"/>
    <property type="chains" value="A=81-467"/>
</dbReference>
<dbReference type="PDB" id="4D8S">
    <property type="method" value="X-ray"/>
    <property type="resolution" value="2.40 A"/>
    <property type="chains" value="A=81-470"/>
</dbReference>
<dbReference type="PDB" id="4GB1">
    <property type="method" value="X-ray"/>
    <property type="resolution" value="2.62 A"/>
    <property type="chains" value="A=81-470"/>
</dbReference>
<dbReference type="PDB" id="4KS1">
    <property type="method" value="X-ray"/>
    <property type="resolution" value="2.20 A"/>
    <property type="chains" value="A=81-470"/>
</dbReference>
<dbReference type="PDB" id="4M3M">
    <property type="method" value="X-ray"/>
    <property type="resolution" value="2.10 A"/>
    <property type="chains" value="A=80-469"/>
</dbReference>
<dbReference type="PDB" id="4MJU">
    <property type="method" value="X-ray"/>
    <property type="resolution" value="2.35 A"/>
    <property type="chains" value="A=81-469"/>
</dbReference>
<dbReference type="PDB" id="4MJV">
    <property type="method" value="X-ray"/>
    <property type="resolution" value="2.65 A"/>
    <property type="chains" value="A=81-470"/>
</dbReference>
<dbReference type="PDBsum" id="2HT5"/>
<dbReference type="PDBsum" id="2HT7"/>
<dbReference type="PDBsum" id="2HT8"/>
<dbReference type="PDBsum" id="2HTQ"/>
<dbReference type="PDBsum" id="2HTR"/>
<dbReference type="PDBsum" id="2HTU"/>
<dbReference type="PDBsum" id="3O9J"/>
<dbReference type="PDBsum" id="3O9K"/>
<dbReference type="PDBsum" id="4D8S"/>
<dbReference type="PDBsum" id="4GB1"/>
<dbReference type="PDBsum" id="4KS1"/>
<dbReference type="PDBsum" id="4M3M"/>
<dbReference type="PDBsum" id="4MJU"/>
<dbReference type="PDBsum" id="4MJV"/>
<dbReference type="SMR" id="Q07599"/>
<dbReference type="DIP" id="DIP-60415N"/>
<dbReference type="BindingDB" id="Q07599"/>
<dbReference type="ChEMBL" id="CHEMBL4295592"/>
<dbReference type="DrugCentral" id="Q07599"/>
<dbReference type="CAZy" id="GH34">
    <property type="family name" value="Glycoside Hydrolase Family 34"/>
</dbReference>
<dbReference type="GlyCosmos" id="Q07599">
    <property type="glycosylation" value="5 sites, No reported glycans"/>
</dbReference>
<dbReference type="BRENDA" id="3.2.1.18">
    <property type="organism ID" value="7479"/>
</dbReference>
<dbReference type="EvolutionaryTrace" id="Q07599"/>
<dbReference type="PRO" id="PR:Q07599"/>
<dbReference type="GO" id="GO:0020002">
    <property type="term" value="C:host cell plasma membrane"/>
    <property type="evidence" value="ECO:0007669"/>
    <property type="project" value="UniProtKB-SubCell"/>
</dbReference>
<dbReference type="GO" id="GO:0016020">
    <property type="term" value="C:membrane"/>
    <property type="evidence" value="ECO:0007669"/>
    <property type="project" value="UniProtKB-UniRule"/>
</dbReference>
<dbReference type="GO" id="GO:0055036">
    <property type="term" value="C:virion membrane"/>
    <property type="evidence" value="ECO:0007669"/>
    <property type="project" value="UniProtKB-SubCell"/>
</dbReference>
<dbReference type="GO" id="GO:0004308">
    <property type="term" value="F:exo-alpha-sialidase activity"/>
    <property type="evidence" value="ECO:0007669"/>
    <property type="project" value="UniProtKB-UniRule"/>
</dbReference>
<dbReference type="GO" id="GO:0046872">
    <property type="term" value="F:metal ion binding"/>
    <property type="evidence" value="ECO:0007669"/>
    <property type="project" value="UniProtKB-UniRule"/>
</dbReference>
<dbReference type="GO" id="GO:0005975">
    <property type="term" value="P:carbohydrate metabolic process"/>
    <property type="evidence" value="ECO:0007669"/>
    <property type="project" value="InterPro"/>
</dbReference>
<dbReference type="GO" id="GO:0046761">
    <property type="term" value="P:viral budding from plasma membrane"/>
    <property type="evidence" value="ECO:0007669"/>
    <property type="project" value="UniProtKB-UniRule"/>
</dbReference>
<dbReference type="Gene3D" id="2.120.10.10">
    <property type="match status" value="1"/>
</dbReference>
<dbReference type="HAMAP" id="MF_04071">
    <property type="entry name" value="INFV_NRAM"/>
    <property type="match status" value="1"/>
</dbReference>
<dbReference type="InterPro" id="IPR001860">
    <property type="entry name" value="Glyco_hydro_34"/>
</dbReference>
<dbReference type="InterPro" id="IPR036278">
    <property type="entry name" value="Sialidase_sf"/>
</dbReference>
<dbReference type="Pfam" id="PF00064">
    <property type="entry name" value="Neur"/>
    <property type="match status" value="1"/>
</dbReference>
<dbReference type="SUPFAM" id="SSF50939">
    <property type="entry name" value="Sialidases"/>
    <property type="match status" value="1"/>
</dbReference>
<sequence length="470" mass="51960">MNPNQKIITIGSISLGLVVFNVLLHVVSIIVTVLVLGKGGNNGICNETVVREYNETVRIEKVTQWHNTNVVEYVPYWNGGTYMNNTEAICDAKGFAPFSKDNGIRIGSRGHIFVIREPFVSCSPIECRTFFLTQGSLLNDKHSNGTVKDRSPFRTLMSVEVGQSPNVYQARFEAVAWSATACHDGKKWMTVGVTGPDSKAVAVIHYGGVPTDVVNSWAGDILRTQESSCTCIQGDCYWVMTDGPANRQAQYRIYKANQGRIIGQTDISFNGGHIEECSCYPNDGKVECVCRDGWTGTNRPVLVISPDLSYRVGYLCAGIPSDTPRGEDTQFTGSCTSPMGNQGYGVKGFGFRQGTDVWMGRTISRTSRSGFEILRIKNGWTQTSKEQIRKQVVVDNLNWSGYSGSFTLPVELSGKDCLVPCFWVEMIRGKPEEKTIWTSSSSIVMCGVDYEVADWSWHDGAILPFDIDKM</sequence>
<accession>Q07599</accession>
<proteinExistence type="evidence at protein level"/>
<evidence type="ECO:0000255" key="1">
    <source>
        <dbReference type="HAMAP-Rule" id="MF_04071"/>
    </source>
</evidence>
<evidence type="ECO:0007829" key="2">
    <source>
        <dbReference type="PDB" id="2HTQ"/>
    </source>
</evidence>
<evidence type="ECO:0007829" key="3">
    <source>
        <dbReference type="PDB" id="3O9J"/>
    </source>
</evidence>
<evidence type="ECO:0007829" key="4">
    <source>
        <dbReference type="PDB" id="4M3M"/>
    </source>
</evidence>
<protein>
    <recommendedName>
        <fullName evidence="1">Neuraminidase</fullName>
        <ecNumber evidence="1">3.2.1.18</ecNumber>
    </recommendedName>
</protein>
<reference key="1">
    <citation type="journal article" date="1993" name="Virology">
        <title>Phylogenetic analysis of the N8 neuraminidase gene of influenza A viruses.</title>
        <authorList>
            <person name="Saito T."/>
            <person name="Kawaoka Y."/>
            <person name="Webster R.G."/>
        </authorList>
    </citation>
    <scope>NUCLEOTIDE SEQUENCE</scope>
</reference>
<reference key="2">
    <citation type="journal article" date="2004" name="Virus Res.">
        <title>Assembly and budding of influenza virus.</title>
        <authorList>
            <person name="Nayak D.P."/>
            <person name="Hui E.K."/>
            <person name="Barman S."/>
        </authorList>
    </citation>
    <scope>REVIEW</scope>
</reference>
<reference key="3">
    <citation type="journal article" date="2005" name="N. Engl. J. Med.">
        <title>Neuraminidase inhibitors for influenza.</title>
        <authorList>
            <person name="Moscona A."/>
        </authorList>
    </citation>
    <scope>REVIEW</scope>
</reference>
<reference key="4">
    <citation type="journal article" date="2005" name="Biol. Pharm. Bull.">
        <title>Sialobiology of influenza: molecular mechanism of host range variation of influenza viruses.</title>
        <authorList>
            <person name="Suzuki Y."/>
        </authorList>
    </citation>
    <scope>REVIEW</scope>
</reference>